<dbReference type="EMBL" id="CP000284">
    <property type="protein sequence ID" value="ABE51010.1"/>
    <property type="molecule type" value="Genomic_DNA"/>
</dbReference>
<dbReference type="RefSeq" id="WP_011480963.1">
    <property type="nucleotide sequence ID" value="NC_007947.1"/>
</dbReference>
<dbReference type="SMR" id="Q1GXM7"/>
<dbReference type="STRING" id="265072.Mfla_2747"/>
<dbReference type="KEGG" id="mfa:Mfla_2747"/>
<dbReference type="eggNOG" id="COG0712">
    <property type="taxonomic scope" value="Bacteria"/>
</dbReference>
<dbReference type="HOGENOM" id="CLU_085114_3_0_4"/>
<dbReference type="OrthoDB" id="9816221at2"/>
<dbReference type="Proteomes" id="UP000002440">
    <property type="component" value="Chromosome"/>
</dbReference>
<dbReference type="GO" id="GO:0005886">
    <property type="term" value="C:plasma membrane"/>
    <property type="evidence" value="ECO:0007669"/>
    <property type="project" value="UniProtKB-SubCell"/>
</dbReference>
<dbReference type="GO" id="GO:0045259">
    <property type="term" value="C:proton-transporting ATP synthase complex"/>
    <property type="evidence" value="ECO:0007669"/>
    <property type="project" value="UniProtKB-KW"/>
</dbReference>
<dbReference type="GO" id="GO:0046933">
    <property type="term" value="F:proton-transporting ATP synthase activity, rotational mechanism"/>
    <property type="evidence" value="ECO:0007669"/>
    <property type="project" value="UniProtKB-UniRule"/>
</dbReference>
<dbReference type="Gene3D" id="1.10.520.20">
    <property type="entry name" value="N-terminal domain of the delta subunit of the F1F0-ATP synthase"/>
    <property type="match status" value="1"/>
</dbReference>
<dbReference type="HAMAP" id="MF_01416">
    <property type="entry name" value="ATP_synth_delta_bact"/>
    <property type="match status" value="1"/>
</dbReference>
<dbReference type="InterPro" id="IPR026015">
    <property type="entry name" value="ATP_synth_OSCP/delta_N_sf"/>
</dbReference>
<dbReference type="InterPro" id="IPR000711">
    <property type="entry name" value="ATPase_OSCP/dsu"/>
</dbReference>
<dbReference type="NCBIfam" id="TIGR01145">
    <property type="entry name" value="ATP_synt_delta"/>
    <property type="match status" value="1"/>
</dbReference>
<dbReference type="NCBIfam" id="NF004402">
    <property type="entry name" value="PRK05758.2-2"/>
    <property type="match status" value="1"/>
</dbReference>
<dbReference type="PANTHER" id="PTHR11910">
    <property type="entry name" value="ATP SYNTHASE DELTA CHAIN"/>
    <property type="match status" value="1"/>
</dbReference>
<dbReference type="Pfam" id="PF00213">
    <property type="entry name" value="OSCP"/>
    <property type="match status" value="1"/>
</dbReference>
<dbReference type="PRINTS" id="PR00125">
    <property type="entry name" value="ATPASEDELTA"/>
</dbReference>
<dbReference type="SUPFAM" id="SSF47928">
    <property type="entry name" value="N-terminal domain of the delta subunit of the F1F0-ATP synthase"/>
    <property type="match status" value="1"/>
</dbReference>
<sequence length="178" mass="19071">MAEAITIARPYAVAVYRLAKEKNALADWSQMLALAAAIAADEQMRAFIDNPKVDAADLERVFLSVSGDRLNEAGTNLIKLLVEYGRLSILPEIAAAFEALKAQDEGVLEAEITAAVQPSDAEFSAIVKRLEAKFGKKVEASVKVDPEIIGGIKIVVGDTVIDASVRGQLQELAYTLKG</sequence>
<accession>Q1GXM7</accession>
<proteinExistence type="inferred from homology"/>
<organism>
    <name type="scientific">Methylobacillus flagellatus (strain ATCC 51484 / DSM 6875 / VKM B-1610 / KT)</name>
    <dbReference type="NCBI Taxonomy" id="265072"/>
    <lineage>
        <taxon>Bacteria</taxon>
        <taxon>Pseudomonadati</taxon>
        <taxon>Pseudomonadota</taxon>
        <taxon>Betaproteobacteria</taxon>
        <taxon>Nitrosomonadales</taxon>
        <taxon>Methylophilaceae</taxon>
        <taxon>Methylobacillus</taxon>
    </lineage>
</organism>
<comment type="function">
    <text evidence="1">F(1)F(0) ATP synthase produces ATP from ADP in the presence of a proton or sodium gradient. F-type ATPases consist of two structural domains, F(1) containing the extramembraneous catalytic core and F(0) containing the membrane proton channel, linked together by a central stalk and a peripheral stalk. During catalysis, ATP synthesis in the catalytic domain of F(1) is coupled via a rotary mechanism of the central stalk subunits to proton translocation.</text>
</comment>
<comment type="function">
    <text evidence="1">This protein is part of the stalk that links CF(0) to CF(1). It either transmits conformational changes from CF(0) to CF(1) or is implicated in proton conduction.</text>
</comment>
<comment type="subunit">
    <text evidence="1">F-type ATPases have 2 components, F(1) - the catalytic core - and F(0) - the membrane proton channel. F(1) has five subunits: alpha(3), beta(3), gamma(1), delta(1), epsilon(1). F(0) has three main subunits: a(1), b(2) and c(10-14). The alpha and beta chains form an alternating ring which encloses part of the gamma chain. F(1) is attached to F(0) by a central stalk formed by the gamma and epsilon chains, while a peripheral stalk is formed by the delta and b chains.</text>
</comment>
<comment type="subcellular location">
    <subcellularLocation>
        <location evidence="1">Cell inner membrane</location>
        <topology evidence="1">Peripheral membrane protein</topology>
    </subcellularLocation>
</comment>
<comment type="similarity">
    <text evidence="1">Belongs to the ATPase delta chain family.</text>
</comment>
<reference key="1">
    <citation type="submission" date="2006-03" db="EMBL/GenBank/DDBJ databases">
        <title>Complete sequence of Methylobacillus flagellatus KT.</title>
        <authorList>
            <consortium name="US DOE Joint Genome Institute"/>
            <person name="Copeland A."/>
            <person name="Lucas S."/>
            <person name="Lapidus A."/>
            <person name="Barry K."/>
            <person name="Detter J.C."/>
            <person name="Glavina del Rio T."/>
            <person name="Hammon N."/>
            <person name="Israni S."/>
            <person name="Dalin E."/>
            <person name="Tice H."/>
            <person name="Pitluck S."/>
            <person name="Brettin T."/>
            <person name="Bruce D."/>
            <person name="Han C."/>
            <person name="Tapia R."/>
            <person name="Saunders E."/>
            <person name="Gilna P."/>
            <person name="Schmutz J."/>
            <person name="Larimer F."/>
            <person name="Land M."/>
            <person name="Kyrpides N."/>
            <person name="Anderson I."/>
            <person name="Richardson P."/>
        </authorList>
    </citation>
    <scope>NUCLEOTIDE SEQUENCE [LARGE SCALE GENOMIC DNA]</scope>
    <source>
        <strain>ATCC 51484 / DSM 6875 / VKM B-1610 / KT</strain>
    </source>
</reference>
<keyword id="KW-0066">ATP synthesis</keyword>
<keyword id="KW-0997">Cell inner membrane</keyword>
<keyword id="KW-1003">Cell membrane</keyword>
<keyword id="KW-0139">CF(1)</keyword>
<keyword id="KW-0375">Hydrogen ion transport</keyword>
<keyword id="KW-0406">Ion transport</keyword>
<keyword id="KW-0472">Membrane</keyword>
<keyword id="KW-1185">Reference proteome</keyword>
<keyword id="KW-0813">Transport</keyword>
<feature type="chain" id="PRO_1000184751" description="ATP synthase subunit delta">
    <location>
        <begin position="1"/>
        <end position="178"/>
    </location>
</feature>
<protein>
    <recommendedName>
        <fullName evidence="1">ATP synthase subunit delta</fullName>
    </recommendedName>
    <alternativeName>
        <fullName evidence="1">ATP synthase F(1) sector subunit delta</fullName>
    </alternativeName>
    <alternativeName>
        <fullName evidence="1">F-type ATPase subunit delta</fullName>
        <shortName evidence="1">F-ATPase subunit delta</shortName>
    </alternativeName>
</protein>
<name>ATPD_METFK</name>
<gene>
    <name evidence="1" type="primary">atpH</name>
    <name type="ordered locus">Mfla_2747</name>
</gene>
<evidence type="ECO:0000255" key="1">
    <source>
        <dbReference type="HAMAP-Rule" id="MF_01416"/>
    </source>
</evidence>